<feature type="peptide" id="PRO_0000378745" description="Periviscerokinin-1" evidence="2">
    <location>
        <begin position="1"/>
        <end position="11"/>
    </location>
</feature>
<feature type="modified residue" description="Threonine amide" evidence="2">
    <location>
        <position position="11"/>
    </location>
</feature>
<comment type="function">
    <text evidence="4">Mediates visceral muscle contractile activity (myotropic activity).</text>
</comment>
<comment type="subcellular location">
    <subcellularLocation>
        <location evidence="4">Secreted</location>
    </subcellularLocation>
</comment>
<comment type="similarity">
    <text evidence="1">Belongs to the periviscerokinin family.</text>
</comment>
<organism>
    <name type="scientific">Gyna cf. cafforum (strain SR-2005)</name>
    <name type="common">Cockroach</name>
    <dbReference type="NCBI Taxonomy" id="348763"/>
    <lineage>
        <taxon>Eukaryota</taxon>
        <taxon>Metazoa</taxon>
        <taxon>Ecdysozoa</taxon>
        <taxon>Arthropoda</taxon>
        <taxon>Hexapoda</taxon>
        <taxon>Insecta</taxon>
        <taxon>Pterygota</taxon>
        <taxon>Neoptera</taxon>
        <taxon>Polyneoptera</taxon>
        <taxon>Dictyoptera</taxon>
        <taxon>Blattodea</taxon>
        <taxon>Blaberoidea</taxon>
        <taxon>Blaberidae</taxon>
        <taxon>Gyninae</taxon>
        <taxon>Gyna</taxon>
    </lineage>
</organism>
<protein>
    <recommendedName>
        <fullName evidence="3">Periviscerokinin-1</fullName>
        <shortName evidence="3">GynCa-PVK-1</shortName>
    </recommendedName>
</protein>
<evidence type="ECO:0000255" key="1"/>
<evidence type="ECO:0000269" key="2">
    <source>
    </source>
</evidence>
<evidence type="ECO:0000303" key="3">
    <source>
    </source>
</evidence>
<evidence type="ECO:0000305" key="4"/>
<sequence>GSTGLIPFGRT</sequence>
<keyword id="KW-0027">Amidation</keyword>
<keyword id="KW-0903">Direct protein sequencing</keyword>
<keyword id="KW-0527">Neuropeptide</keyword>
<keyword id="KW-0964">Secreted</keyword>
<name>PVK1_GYNCS</name>
<dbReference type="GO" id="GO:0005576">
    <property type="term" value="C:extracellular region"/>
    <property type="evidence" value="ECO:0007669"/>
    <property type="project" value="UniProtKB-SubCell"/>
</dbReference>
<dbReference type="GO" id="GO:0007218">
    <property type="term" value="P:neuropeptide signaling pathway"/>
    <property type="evidence" value="ECO:0007669"/>
    <property type="project" value="UniProtKB-KW"/>
</dbReference>
<dbReference type="InterPro" id="IPR013231">
    <property type="entry name" value="Periviscerokinin"/>
</dbReference>
<dbReference type="Pfam" id="PF08259">
    <property type="entry name" value="Periviscerokin"/>
    <property type="match status" value="1"/>
</dbReference>
<accession>P85643</accession>
<reference evidence="4" key="1">
    <citation type="journal article" date="2009" name="BMC Evol. Biol.">
        <title>A proteomic approach for studying insect phylogeny: CAPA peptides of ancient insect taxa (Dictyoptera, Blattoptera) as a test case.</title>
        <authorList>
            <person name="Roth S."/>
            <person name="Fromm B."/>
            <person name="Gaede G."/>
            <person name="Predel R."/>
        </authorList>
    </citation>
    <scope>PROTEIN SEQUENCE</scope>
    <scope>AMIDATION AT THR-11</scope>
    <source>
        <tissue evidence="2">Abdominal perisympathetic organs</tissue>
    </source>
</reference>
<proteinExistence type="evidence at protein level"/>